<dbReference type="EC" id="5.2.1.8" evidence="1"/>
<dbReference type="EMBL" id="CP001649">
    <property type="protein sequence ID" value="ACS80123.1"/>
    <property type="molecule type" value="Genomic_DNA"/>
</dbReference>
<dbReference type="RefSeq" id="WP_015851939.1">
    <property type="nucleotide sequence ID" value="NC_012881.1"/>
</dbReference>
<dbReference type="SMR" id="C6BVE8"/>
<dbReference type="STRING" id="526222.Desal_2063"/>
<dbReference type="KEGG" id="dsa:Desal_2063"/>
<dbReference type="eggNOG" id="COG0544">
    <property type="taxonomic scope" value="Bacteria"/>
</dbReference>
<dbReference type="HOGENOM" id="CLU_033058_3_1_7"/>
<dbReference type="OrthoDB" id="9767721at2"/>
<dbReference type="Proteomes" id="UP000002601">
    <property type="component" value="Chromosome"/>
</dbReference>
<dbReference type="GO" id="GO:0005737">
    <property type="term" value="C:cytoplasm"/>
    <property type="evidence" value="ECO:0007669"/>
    <property type="project" value="UniProtKB-SubCell"/>
</dbReference>
<dbReference type="GO" id="GO:0003755">
    <property type="term" value="F:peptidyl-prolyl cis-trans isomerase activity"/>
    <property type="evidence" value="ECO:0007669"/>
    <property type="project" value="UniProtKB-UniRule"/>
</dbReference>
<dbReference type="GO" id="GO:0044183">
    <property type="term" value="F:protein folding chaperone"/>
    <property type="evidence" value="ECO:0007669"/>
    <property type="project" value="TreeGrafter"/>
</dbReference>
<dbReference type="GO" id="GO:0043022">
    <property type="term" value="F:ribosome binding"/>
    <property type="evidence" value="ECO:0007669"/>
    <property type="project" value="TreeGrafter"/>
</dbReference>
<dbReference type="GO" id="GO:0051083">
    <property type="term" value="P:'de novo' cotranslational protein folding"/>
    <property type="evidence" value="ECO:0007669"/>
    <property type="project" value="TreeGrafter"/>
</dbReference>
<dbReference type="GO" id="GO:0051301">
    <property type="term" value="P:cell division"/>
    <property type="evidence" value="ECO:0007669"/>
    <property type="project" value="UniProtKB-KW"/>
</dbReference>
<dbReference type="GO" id="GO:0061077">
    <property type="term" value="P:chaperone-mediated protein folding"/>
    <property type="evidence" value="ECO:0007669"/>
    <property type="project" value="TreeGrafter"/>
</dbReference>
<dbReference type="GO" id="GO:0015031">
    <property type="term" value="P:protein transport"/>
    <property type="evidence" value="ECO:0007669"/>
    <property type="project" value="UniProtKB-UniRule"/>
</dbReference>
<dbReference type="GO" id="GO:0043335">
    <property type="term" value="P:protein unfolding"/>
    <property type="evidence" value="ECO:0007669"/>
    <property type="project" value="TreeGrafter"/>
</dbReference>
<dbReference type="Gene3D" id="3.10.50.40">
    <property type="match status" value="1"/>
</dbReference>
<dbReference type="Gene3D" id="3.30.70.1050">
    <property type="entry name" value="Trigger factor ribosome-binding domain"/>
    <property type="match status" value="1"/>
</dbReference>
<dbReference type="Gene3D" id="1.10.3120.10">
    <property type="entry name" value="Trigger factor, C-terminal domain"/>
    <property type="match status" value="1"/>
</dbReference>
<dbReference type="HAMAP" id="MF_00303">
    <property type="entry name" value="Trigger_factor_Tig"/>
    <property type="match status" value="1"/>
</dbReference>
<dbReference type="InterPro" id="IPR046357">
    <property type="entry name" value="PPIase_dom_sf"/>
</dbReference>
<dbReference type="InterPro" id="IPR001179">
    <property type="entry name" value="PPIase_FKBP_dom"/>
</dbReference>
<dbReference type="InterPro" id="IPR005215">
    <property type="entry name" value="Trig_fac"/>
</dbReference>
<dbReference type="InterPro" id="IPR008880">
    <property type="entry name" value="Trigger_fac_C"/>
</dbReference>
<dbReference type="InterPro" id="IPR037041">
    <property type="entry name" value="Trigger_fac_C_sf"/>
</dbReference>
<dbReference type="InterPro" id="IPR008881">
    <property type="entry name" value="Trigger_fac_ribosome-bd_bac"/>
</dbReference>
<dbReference type="InterPro" id="IPR036611">
    <property type="entry name" value="Trigger_fac_ribosome-bd_sf"/>
</dbReference>
<dbReference type="InterPro" id="IPR027304">
    <property type="entry name" value="Trigger_fact/SurA_dom_sf"/>
</dbReference>
<dbReference type="NCBIfam" id="TIGR00115">
    <property type="entry name" value="tig"/>
    <property type="match status" value="1"/>
</dbReference>
<dbReference type="PANTHER" id="PTHR30560">
    <property type="entry name" value="TRIGGER FACTOR CHAPERONE AND PEPTIDYL-PROLYL CIS/TRANS ISOMERASE"/>
    <property type="match status" value="1"/>
</dbReference>
<dbReference type="PANTHER" id="PTHR30560:SF3">
    <property type="entry name" value="TRIGGER FACTOR-LIKE PROTEIN TIG, CHLOROPLASTIC"/>
    <property type="match status" value="1"/>
</dbReference>
<dbReference type="Pfam" id="PF00254">
    <property type="entry name" value="FKBP_C"/>
    <property type="match status" value="1"/>
</dbReference>
<dbReference type="Pfam" id="PF05698">
    <property type="entry name" value="Trigger_C"/>
    <property type="match status" value="1"/>
</dbReference>
<dbReference type="Pfam" id="PF05697">
    <property type="entry name" value="Trigger_N"/>
    <property type="match status" value="1"/>
</dbReference>
<dbReference type="PIRSF" id="PIRSF003095">
    <property type="entry name" value="Trigger_factor"/>
    <property type="match status" value="1"/>
</dbReference>
<dbReference type="SUPFAM" id="SSF54534">
    <property type="entry name" value="FKBP-like"/>
    <property type="match status" value="1"/>
</dbReference>
<dbReference type="SUPFAM" id="SSF109998">
    <property type="entry name" value="Triger factor/SurA peptide-binding domain-like"/>
    <property type="match status" value="1"/>
</dbReference>
<dbReference type="SUPFAM" id="SSF102735">
    <property type="entry name" value="Trigger factor ribosome-binding domain"/>
    <property type="match status" value="1"/>
</dbReference>
<comment type="function">
    <text evidence="1">Involved in protein export. Acts as a chaperone by maintaining the newly synthesized protein in an open conformation. Functions as a peptidyl-prolyl cis-trans isomerase.</text>
</comment>
<comment type="catalytic activity">
    <reaction evidence="1">
        <text>[protein]-peptidylproline (omega=180) = [protein]-peptidylproline (omega=0)</text>
        <dbReference type="Rhea" id="RHEA:16237"/>
        <dbReference type="Rhea" id="RHEA-COMP:10747"/>
        <dbReference type="Rhea" id="RHEA-COMP:10748"/>
        <dbReference type="ChEBI" id="CHEBI:83833"/>
        <dbReference type="ChEBI" id="CHEBI:83834"/>
        <dbReference type="EC" id="5.2.1.8"/>
    </reaction>
</comment>
<comment type="subcellular location">
    <subcellularLocation>
        <location>Cytoplasm</location>
    </subcellularLocation>
    <text evidence="1">About half TF is bound to the ribosome near the polypeptide exit tunnel while the other half is free in the cytoplasm.</text>
</comment>
<comment type="domain">
    <text evidence="1">Consists of 3 domains; the N-terminus binds the ribosome, the middle domain has PPIase activity, while the C-terminus has intrinsic chaperone activity on its own.</text>
</comment>
<comment type="similarity">
    <text evidence="1">Belongs to the FKBP-type PPIase family. Tig subfamily.</text>
</comment>
<proteinExistence type="inferred from homology"/>
<keyword id="KW-0131">Cell cycle</keyword>
<keyword id="KW-0132">Cell division</keyword>
<keyword id="KW-0143">Chaperone</keyword>
<keyword id="KW-0963">Cytoplasm</keyword>
<keyword id="KW-0413">Isomerase</keyword>
<keyword id="KW-1185">Reference proteome</keyword>
<keyword id="KW-0697">Rotamase</keyword>
<feature type="chain" id="PRO_1000204983" description="Trigger factor">
    <location>
        <begin position="1"/>
        <end position="435"/>
    </location>
</feature>
<feature type="domain" description="PPIase FKBP-type" evidence="1">
    <location>
        <begin position="163"/>
        <end position="248"/>
    </location>
</feature>
<gene>
    <name evidence="1" type="primary">tig</name>
    <name type="ordered locus">Desal_2063</name>
</gene>
<organism>
    <name type="scientific">Maridesulfovibrio salexigens (strain ATCC 14822 / DSM 2638 / NCIMB 8403 / VKM B-1763)</name>
    <name type="common">Desulfovibrio salexigens</name>
    <dbReference type="NCBI Taxonomy" id="526222"/>
    <lineage>
        <taxon>Bacteria</taxon>
        <taxon>Pseudomonadati</taxon>
        <taxon>Thermodesulfobacteriota</taxon>
        <taxon>Desulfovibrionia</taxon>
        <taxon>Desulfovibrionales</taxon>
        <taxon>Desulfovibrionaceae</taxon>
        <taxon>Maridesulfovibrio</taxon>
    </lineage>
</organism>
<protein>
    <recommendedName>
        <fullName evidence="1">Trigger factor</fullName>
        <shortName evidence="1">TF</shortName>
        <ecNumber evidence="1">5.2.1.8</ecNumber>
    </recommendedName>
    <alternativeName>
        <fullName evidence="1">PPIase</fullName>
    </alternativeName>
</protein>
<accession>C6BVE8</accession>
<name>TIG_MARSD</name>
<reference key="1">
    <citation type="submission" date="2009-06" db="EMBL/GenBank/DDBJ databases">
        <title>Complete sequence of Desulfovibrio salexigens DSM 2638.</title>
        <authorList>
            <consortium name="US DOE Joint Genome Institute"/>
            <person name="Lucas S."/>
            <person name="Copeland A."/>
            <person name="Lapidus A."/>
            <person name="Glavina del Rio T."/>
            <person name="Tice H."/>
            <person name="Bruce D."/>
            <person name="Goodwin L."/>
            <person name="Pitluck S."/>
            <person name="Munk A.C."/>
            <person name="Brettin T."/>
            <person name="Detter J.C."/>
            <person name="Han C."/>
            <person name="Tapia R."/>
            <person name="Larimer F."/>
            <person name="Land M."/>
            <person name="Hauser L."/>
            <person name="Kyrpides N."/>
            <person name="Anderson I."/>
            <person name="Wall J.D."/>
            <person name="Arkin A.P."/>
            <person name="Dehal P."/>
            <person name="Chivian D."/>
            <person name="Giles B."/>
            <person name="Hazen T.C."/>
        </authorList>
    </citation>
    <scope>NUCLEOTIDE SEQUENCE [LARGE SCALE GENOMIC DNA]</scope>
    <source>
        <strain>ATCC 14822 / DSM 2638 / NCIMB 8403 / VKM B-1763</strain>
    </source>
</reference>
<sequence length="435" mass="48567">MDFNIEEVSAVEREIKVSVPAEEVGAALDATVALYKVQTPVKGFRKGKVPASVIQSKYKKQIINEATTDLINYQINDILNGQSLVPVSKIDVDAKELVRGEDFSYVIKFEIVPEFDTPGYLGLPVEEERAEVTEDELKEVENRLLQSMAKIAPIEDDRPAKDGELASVTFSAEMDGEPIPGVQADNFDLPIGEGHSLEEFEEFVKTLKAGESGETDITFPEDFINSDLAGKTATMKVTVHAVKERKMPELTDDVVKQAGGFESVEKMREIVKQSYTANRKQLNKSAAQTKLISGIVKELDFPLPPSLMEDRLQRMVADVIGRAERSGKSFESLGKSMEELREEQRPVAEESVRTEIFLLNVAKREELSVEPQEVEGALYQIAQQTQQDLSSVKSYYEENNLIVPLKDRLLADKAAEFIYENADVTEIDPVKKDDK</sequence>
<evidence type="ECO:0000255" key="1">
    <source>
        <dbReference type="HAMAP-Rule" id="MF_00303"/>
    </source>
</evidence>